<proteinExistence type="predicted"/>
<feature type="chain" id="PRO_0000205371" description="Uncharacterized protein YibR">
    <location>
        <begin position="1"/>
        <end position="77"/>
    </location>
</feature>
<feature type="sequence conflict" description="In Ref. 1; AAB25551." evidence="1" ref="1">
    <original>D</original>
    <variation>N</variation>
    <location>
        <position position="62"/>
    </location>
</feature>
<organism>
    <name type="scientific">Salmonella typhimurium (strain LT2 / SGSC1412 / ATCC 700720)</name>
    <dbReference type="NCBI Taxonomy" id="99287"/>
    <lineage>
        <taxon>Bacteria</taxon>
        <taxon>Pseudomonadati</taxon>
        <taxon>Pseudomonadota</taxon>
        <taxon>Gammaproteobacteria</taxon>
        <taxon>Enterobacterales</taxon>
        <taxon>Enterobacteriaceae</taxon>
        <taxon>Salmonella</taxon>
    </lineage>
</organism>
<keyword id="KW-1185">Reference proteome</keyword>
<name>YIBR_SALTY</name>
<reference key="1">
    <citation type="journal article" date="1993" name="J. Bacteriol.">
        <title>The rfaS gene, which is involved in production of a rough form of lipopolysaccharide core in Escherichia coli K-12, is not present in the rfa cluster of Salmonella typhimurium LT2.</title>
        <authorList>
            <person name="Klena J.D."/>
            <person name="Pradel E."/>
            <person name="Schnaitman C.A."/>
        </authorList>
    </citation>
    <scope>NUCLEOTIDE SEQUENCE [GENOMIC DNA]</scope>
    <source>
        <strain>LT2</strain>
    </source>
</reference>
<reference key="2">
    <citation type="journal article" date="2001" name="Nature">
        <title>Complete genome sequence of Salmonella enterica serovar Typhimurium LT2.</title>
        <authorList>
            <person name="McClelland M."/>
            <person name="Sanderson K.E."/>
            <person name="Spieth J."/>
            <person name="Clifton S.W."/>
            <person name="Latreille P."/>
            <person name="Courtney L."/>
            <person name="Porwollik S."/>
            <person name="Ali J."/>
            <person name="Dante M."/>
            <person name="Du F."/>
            <person name="Hou S."/>
            <person name="Layman D."/>
            <person name="Leonard S."/>
            <person name="Nguyen C."/>
            <person name="Scott K."/>
            <person name="Holmes A."/>
            <person name="Grewal N."/>
            <person name="Mulvaney E."/>
            <person name="Ryan E."/>
            <person name="Sun H."/>
            <person name="Florea L."/>
            <person name="Miller W."/>
            <person name="Stoneking T."/>
            <person name="Nhan M."/>
            <person name="Waterston R."/>
            <person name="Wilson R.K."/>
        </authorList>
    </citation>
    <scope>NUCLEOTIDE SEQUENCE [LARGE SCALE GENOMIC DNA]</scope>
    <source>
        <strain>LT2 / SGSC1412 / ATCC 700720</strain>
    </source>
</reference>
<accession>P40824</accession>
<dbReference type="EMBL" id="S56361">
    <property type="protein sequence ID" value="AAB25551.1"/>
    <property type="molecule type" value="Genomic_DNA"/>
</dbReference>
<dbReference type="EMBL" id="AE006468">
    <property type="protein sequence ID" value="AAL22579.1"/>
    <property type="molecule type" value="Genomic_DNA"/>
</dbReference>
<dbReference type="PIR" id="B47074">
    <property type="entry name" value="B47074"/>
</dbReference>
<dbReference type="RefSeq" id="NP_462620.1">
    <property type="nucleotide sequence ID" value="NC_003197.2"/>
</dbReference>
<dbReference type="RefSeq" id="WP_001599843.1">
    <property type="nucleotide sequence ID" value="NC_003197.2"/>
</dbReference>
<dbReference type="STRING" id="99287.STM3720"/>
<dbReference type="PaxDb" id="99287-STM3720"/>
<dbReference type="GeneID" id="1255244"/>
<dbReference type="KEGG" id="stm:STM3720"/>
<dbReference type="PATRIC" id="fig|99287.12.peg.3934"/>
<dbReference type="HOGENOM" id="CLU_2773483_0_0_6"/>
<dbReference type="OMA" id="HGFIMPE"/>
<dbReference type="BioCyc" id="SENT99287:STM3720-MONOMER"/>
<dbReference type="Proteomes" id="UP000001014">
    <property type="component" value="Chromosome"/>
</dbReference>
<evidence type="ECO:0000305" key="1"/>
<gene>
    <name type="primary">yibR</name>
    <name type="ordered locus">STM3720</name>
</gene>
<protein>
    <recommendedName>
        <fullName>Uncharacterized protein YibR</fullName>
    </recommendedName>
</protein>
<sequence length="77" mass="8995">MSETRIDRMSNIKSYISNQKNIIQHDDFFGRRLDIALCFDHGFIMPAGVAIYSIIENNKDIDYALKQKERCQVKITL</sequence>